<protein>
    <recommendedName>
        <fullName evidence="1">Isoleucine--tRNA ligase</fullName>
        <ecNumber evidence="1">6.1.1.5</ecNumber>
    </recommendedName>
    <alternativeName>
        <fullName evidence="1">Isoleucyl-tRNA synthetase</fullName>
        <shortName evidence="1">IleRS</shortName>
    </alternativeName>
</protein>
<gene>
    <name evidence="1" type="primary">ileS</name>
    <name type="ordered locus">YPN_0347</name>
    <name type="ORF">YP516_0354</name>
</gene>
<name>SYI_YERPN</name>
<sequence>MSDYKNTLNLPETGFPMRGDLAKREPDMLKRWYEQDLYGIIRAAKKGKKTFILHDGPPYANGNIHIGHSVNKILKDIIVKSKGMAGYDSPYIPGWDCHGLPIELKVEQLIGKPGEKVSAAEFRTACRKYAAEQVEGQKKDFIRLGVLGDWDHPYLTMDFKTEANIIRALSKIIDNGHLHKGAKPVHWCTDCGSSLAEAEVEYYDKTSQSIDVRFNAVDTATVAAKFGVSAVNGPISLVIWTTTPWTLPANRAISLNAEYLYQLVQVEGECLILAADLVESVMKRAGITQWAVLGSCTGSDLELLRFTHPFMGFDVPAILGDHVTLDAGTGAVHTAPGHGPDDFVIGQKYGLEVANPVGPNGCYLAGTYPTLDGLFVFKANDVVVELLREKGALLHVEKLLHSYPCCWRHKTPIIFRATPQWFISMDQKGLRKQSLQEIKGVQWIPDWGQARIETMVANRPDWCISRQRTWGVPMSLFVHKETEQLHPRSIELMEEVAKRVEQDGIQAWWDLDPAEILGADAADYVKVPDTLDVWFDSGSTHSSVVDVRPEFGGHSPDMYLEGSDQHRGWFMSSLMIATAMKGKAPYRQVLTHGFTVDGQGRKMSKSIGNTISPQDVMNKLGGDILRLWVASTDYTGEIAVSDEILKRSADSYRRIRNTARFLLANLNGFDPAQHQVKPEEMVVVDRWAVGRAQAAQAEIMEAYENYDFHLVVQRLMQFCSVEMGSFYLDIIKDRQYTAKGDGIARRSCQTALFHIAEALVRWMAPIMSFTADEIWNHLPGERQQYVFTEEWYDGLFGLAGNESMNDTFWAELLKVRGEVNKVLEQARSDKRIGGSLEAAVTLYAEPELAARLNSLQDELRFVLLTSAAKVAAYADAGNDAQQSELIAGLKITFNKADGEKCPRCWHYTQDVGLVAEHAELCGRCVTNVAGDGEERKFA</sequence>
<reference key="1">
    <citation type="journal article" date="2006" name="J. Bacteriol.">
        <title>Complete genome sequence of Yersinia pestis strains Antiqua and Nepal516: evidence of gene reduction in an emerging pathogen.</title>
        <authorList>
            <person name="Chain P.S.G."/>
            <person name="Hu P."/>
            <person name="Malfatti S.A."/>
            <person name="Radnedge L."/>
            <person name="Larimer F."/>
            <person name="Vergez L.M."/>
            <person name="Worsham P."/>
            <person name="Chu M.C."/>
            <person name="Andersen G.L."/>
        </authorList>
    </citation>
    <scope>NUCLEOTIDE SEQUENCE [LARGE SCALE GENOMIC DNA]</scope>
    <source>
        <strain>Nepal516</strain>
    </source>
</reference>
<reference key="2">
    <citation type="submission" date="2009-04" db="EMBL/GenBank/DDBJ databases">
        <title>Yersinia pestis Nepal516A whole genome shotgun sequencing project.</title>
        <authorList>
            <person name="Plunkett G. III"/>
            <person name="Anderson B.D."/>
            <person name="Baumler D.J."/>
            <person name="Burland V."/>
            <person name="Cabot E.L."/>
            <person name="Glasner J.D."/>
            <person name="Mau B."/>
            <person name="Neeno-Eckwall E."/>
            <person name="Perna N.T."/>
            <person name="Munk A.C."/>
            <person name="Tapia R."/>
            <person name="Green L.D."/>
            <person name="Rogers Y.C."/>
            <person name="Detter J.C."/>
            <person name="Bruce D.C."/>
            <person name="Brettin T.S."/>
        </authorList>
    </citation>
    <scope>NUCLEOTIDE SEQUENCE [LARGE SCALE GENOMIC DNA]</scope>
    <source>
        <strain>Nepal516</strain>
    </source>
</reference>
<organism>
    <name type="scientific">Yersinia pestis bv. Antiqua (strain Nepal516)</name>
    <dbReference type="NCBI Taxonomy" id="377628"/>
    <lineage>
        <taxon>Bacteria</taxon>
        <taxon>Pseudomonadati</taxon>
        <taxon>Pseudomonadota</taxon>
        <taxon>Gammaproteobacteria</taxon>
        <taxon>Enterobacterales</taxon>
        <taxon>Yersiniaceae</taxon>
        <taxon>Yersinia</taxon>
    </lineage>
</organism>
<accession>Q1CMV1</accession>
<accession>C4GNQ0</accession>
<evidence type="ECO:0000255" key="1">
    <source>
        <dbReference type="HAMAP-Rule" id="MF_02002"/>
    </source>
</evidence>
<dbReference type="EC" id="6.1.1.5" evidence="1"/>
<dbReference type="EMBL" id="CP000305">
    <property type="protein sequence ID" value="ABG16679.1"/>
    <property type="molecule type" value="Genomic_DNA"/>
</dbReference>
<dbReference type="EMBL" id="ACNQ01000006">
    <property type="protein sequence ID" value="EEO78132.1"/>
    <property type="molecule type" value="Genomic_DNA"/>
</dbReference>
<dbReference type="RefSeq" id="WP_002210509.1">
    <property type="nucleotide sequence ID" value="NZ_ACNQ01000006.1"/>
</dbReference>
<dbReference type="SMR" id="Q1CMV1"/>
<dbReference type="GeneID" id="57974135"/>
<dbReference type="KEGG" id="ypn:YPN_0347"/>
<dbReference type="HOGENOM" id="CLU_001493_7_1_6"/>
<dbReference type="Proteomes" id="UP000008936">
    <property type="component" value="Chromosome"/>
</dbReference>
<dbReference type="GO" id="GO:0005829">
    <property type="term" value="C:cytosol"/>
    <property type="evidence" value="ECO:0007669"/>
    <property type="project" value="TreeGrafter"/>
</dbReference>
<dbReference type="GO" id="GO:0002161">
    <property type="term" value="F:aminoacyl-tRNA deacylase activity"/>
    <property type="evidence" value="ECO:0007669"/>
    <property type="project" value="InterPro"/>
</dbReference>
<dbReference type="GO" id="GO:0005524">
    <property type="term" value="F:ATP binding"/>
    <property type="evidence" value="ECO:0007669"/>
    <property type="project" value="UniProtKB-UniRule"/>
</dbReference>
<dbReference type="GO" id="GO:0004822">
    <property type="term" value="F:isoleucine-tRNA ligase activity"/>
    <property type="evidence" value="ECO:0007669"/>
    <property type="project" value="UniProtKB-UniRule"/>
</dbReference>
<dbReference type="GO" id="GO:0000049">
    <property type="term" value="F:tRNA binding"/>
    <property type="evidence" value="ECO:0007669"/>
    <property type="project" value="InterPro"/>
</dbReference>
<dbReference type="GO" id="GO:0008270">
    <property type="term" value="F:zinc ion binding"/>
    <property type="evidence" value="ECO:0007669"/>
    <property type="project" value="UniProtKB-UniRule"/>
</dbReference>
<dbReference type="GO" id="GO:0006428">
    <property type="term" value="P:isoleucyl-tRNA aminoacylation"/>
    <property type="evidence" value="ECO:0007669"/>
    <property type="project" value="UniProtKB-UniRule"/>
</dbReference>
<dbReference type="CDD" id="cd07960">
    <property type="entry name" value="Anticodon_Ia_Ile_BEm"/>
    <property type="match status" value="1"/>
</dbReference>
<dbReference type="CDD" id="cd00818">
    <property type="entry name" value="IleRS_core"/>
    <property type="match status" value="1"/>
</dbReference>
<dbReference type="FunFam" id="1.10.730.20:FF:000001">
    <property type="entry name" value="Isoleucine--tRNA ligase"/>
    <property type="match status" value="1"/>
</dbReference>
<dbReference type="FunFam" id="3.40.50.620:FF:000042">
    <property type="entry name" value="Isoleucine--tRNA ligase"/>
    <property type="match status" value="1"/>
</dbReference>
<dbReference type="FunFam" id="3.40.50.620:FF:000048">
    <property type="entry name" value="Isoleucine--tRNA ligase"/>
    <property type="match status" value="1"/>
</dbReference>
<dbReference type="FunFam" id="3.90.740.10:FF:000002">
    <property type="entry name" value="Isoleucine--tRNA ligase"/>
    <property type="match status" value="1"/>
</dbReference>
<dbReference type="Gene3D" id="1.10.730.20">
    <property type="match status" value="1"/>
</dbReference>
<dbReference type="Gene3D" id="3.40.50.620">
    <property type="entry name" value="HUPs"/>
    <property type="match status" value="2"/>
</dbReference>
<dbReference type="Gene3D" id="3.90.740.10">
    <property type="entry name" value="Valyl/Leucyl/Isoleucyl-tRNA synthetase, editing domain"/>
    <property type="match status" value="1"/>
</dbReference>
<dbReference type="HAMAP" id="MF_02002">
    <property type="entry name" value="Ile_tRNA_synth_type1"/>
    <property type="match status" value="1"/>
</dbReference>
<dbReference type="InterPro" id="IPR001412">
    <property type="entry name" value="aa-tRNA-synth_I_CS"/>
</dbReference>
<dbReference type="InterPro" id="IPR002300">
    <property type="entry name" value="aa-tRNA-synth_Ia"/>
</dbReference>
<dbReference type="InterPro" id="IPR033708">
    <property type="entry name" value="Anticodon_Ile_BEm"/>
</dbReference>
<dbReference type="InterPro" id="IPR002301">
    <property type="entry name" value="Ile-tRNA-ligase"/>
</dbReference>
<dbReference type="InterPro" id="IPR023585">
    <property type="entry name" value="Ile-tRNA-ligase_type1"/>
</dbReference>
<dbReference type="InterPro" id="IPR050081">
    <property type="entry name" value="Ile-tRNA_ligase"/>
</dbReference>
<dbReference type="InterPro" id="IPR013155">
    <property type="entry name" value="M/V/L/I-tRNA-synth_anticd-bd"/>
</dbReference>
<dbReference type="InterPro" id="IPR014729">
    <property type="entry name" value="Rossmann-like_a/b/a_fold"/>
</dbReference>
<dbReference type="InterPro" id="IPR009080">
    <property type="entry name" value="tRNAsynth_Ia_anticodon-bd"/>
</dbReference>
<dbReference type="InterPro" id="IPR009008">
    <property type="entry name" value="Val/Leu/Ile-tRNA-synth_edit"/>
</dbReference>
<dbReference type="InterPro" id="IPR010663">
    <property type="entry name" value="Znf_FPG/IleRS"/>
</dbReference>
<dbReference type="NCBIfam" id="TIGR00392">
    <property type="entry name" value="ileS"/>
    <property type="match status" value="1"/>
</dbReference>
<dbReference type="PANTHER" id="PTHR42765:SF1">
    <property type="entry name" value="ISOLEUCINE--TRNA LIGASE, MITOCHONDRIAL"/>
    <property type="match status" value="1"/>
</dbReference>
<dbReference type="PANTHER" id="PTHR42765">
    <property type="entry name" value="SOLEUCYL-TRNA SYNTHETASE"/>
    <property type="match status" value="1"/>
</dbReference>
<dbReference type="Pfam" id="PF08264">
    <property type="entry name" value="Anticodon_1"/>
    <property type="match status" value="1"/>
</dbReference>
<dbReference type="Pfam" id="PF00133">
    <property type="entry name" value="tRNA-synt_1"/>
    <property type="match status" value="1"/>
</dbReference>
<dbReference type="Pfam" id="PF06827">
    <property type="entry name" value="zf-FPG_IleRS"/>
    <property type="match status" value="1"/>
</dbReference>
<dbReference type="PRINTS" id="PR00984">
    <property type="entry name" value="TRNASYNTHILE"/>
</dbReference>
<dbReference type="SUPFAM" id="SSF47323">
    <property type="entry name" value="Anticodon-binding domain of a subclass of class I aminoacyl-tRNA synthetases"/>
    <property type="match status" value="1"/>
</dbReference>
<dbReference type="SUPFAM" id="SSF52374">
    <property type="entry name" value="Nucleotidylyl transferase"/>
    <property type="match status" value="1"/>
</dbReference>
<dbReference type="SUPFAM" id="SSF50677">
    <property type="entry name" value="ValRS/IleRS/LeuRS editing domain"/>
    <property type="match status" value="1"/>
</dbReference>
<dbReference type="PROSITE" id="PS00178">
    <property type="entry name" value="AA_TRNA_LIGASE_I"/>
    <property type="match status" value="1"/>
</dbReference>
<feature type="chain" id="PRO_1000022145" description="Isoleucine--tRNA ligase">
    <location>
        <begin position="1"/>
        <end position="938"/>
    </location>
</feature>
<feature type="short sequence motif" description="'HIGH' region">
    <location>
        <begin position="58"/>
        <end position="68"/>
    </location>
</feature>
<feature type="short sequence motif" description="'KMSKS' region">
    <location>
        <begin position="602"/>
        <end position="606"/>
    </location>
</feature>
<feature type="binding site" evidence="1">
    <location>
        <position position="561"/>
    </location>
    <ligand>
        <name>L-isoleucyl-5'-AMP</name>
        <dbReference type="ChEBI" id="CHEBI:178002"/>
    </ligand>
</feature>
<feature type="binding site" evidence="1">
    <location>
        <position position="605"/>
    </location>
    <ligand>
        <name>ATP</name>
        <dbReference type="ChEBI" id="CHEBI:30616"/>
    </ligand>
</feature>
<feature type="binding site" evidence="1">
    <location>
        <position position="901"/>
    </location>
    <ligand>
        <name>Zn(2+)</name>
        <dbReference type="ChEBI" id="CHEBI:29105"/>
    </ligand>
</feature>
<feature type="binding site" evidence="1">
    <location>
        <position position="904"/>
    </location>
    <ligand>
        <name>Zn(2+)</name>
        <dbReference type="ChEBI" id="CHEBI:29105"/>
    </ligand>
</feature>
<feature type="binding site" evidence="1">
    <location>
        <position position="921"/>
    </location>
    <ligand>
        <name>Zn(2+)</name>
        <dbReference type="ChEBI" id="CHEBI:29105"/>
    </ligand>
</feature>
<feature type="binding site" evidence="1">
    <location>
        <position position="924"/>
    </location>
    <ligand>
        <name>Zn(2+)</name>
        <dbReference type="ChEBI" id="CHEBI:29105"/>
    </ligand>
</feature>
<keyword id="KW-0030">Aminoacyl-tRNA synthetase</keyword>
<keyword id="KW-0067">ATP-binding</keyword>
<keyword id="KW-0963">Cytoplasm</keyword>
<keyword id="KW-0436">Ligase</keyword>
<keyword id="KW-0479">Metal-binding</keyword>
<keyword id="KW-0547">Nucleotide-binding</keyword>
<keyword id="KW-0648">Protein biosynthesis</keyword>
<keyword id="KW-0862">Zinc</keyword>
<comment type="function">
    <text evidence="1">Catalyzes the attachment of isoleucine to tRNA(Ile). As IleRS can inadvertently accommodate and process structurally similar amino acids such as valine, to avoid such errors it has two additional distinct tRNA(Ile)-dependent editing activities. One activity is designated as 'pretransfer' editing and involves the hydrolysis of activated Val-AMP. The other activity is designated 'posttransfer' editing and involves deacylation of mischarged Val-tRNA(Ile).</text>
</comment>
<comment type="catalytic activity">
    <reaction evidence="1">
        <text>tRNA(Ile) + L-isoleucine + ATP = L-isoleucyl-tRNA(Ile) + AMP + diphosphate</text>
        <dbReference type="Rhea" id="RHEA:11060"/>
        <dbReference type="Rhea" id="RHEA-COMP:9666"/>
        <dbReference type="Rhea" id="RHEA-COMP:9695"/>
        <dbReference type="ChEBI" id="CHEBI:30616"/>
        <dbReference type="ChEBI" id="CHEBI:33019"/>
        <dbReference type="ChEBI" id="CHEBI:58045"/>
        <dbReference type="ChEBI" id="CHEBI:78442"/>
        <dbReference type="ChEBI" id="CHEBI:78528"/>
        <dbReference type="ChEBI" id="CHEBI:456215"/>
        <dbReference type="EC" id="6.1.1.5"/>
    </reaction>
</comment>
<comment type="cofactor">
    <cofactor evidence="1">
        <name>Zn(2+)</name>
        <dbReference type="ChEBI" id="CHEBI:29105"/>
    </cofactor>
    <text evidence="1">Binds 1 zinc ion per subunit.</text>
</comment>
<comment type="subunit">
    <text evidence="1">Monomer.</text>
</comment>
<comment type="subcellular location">
    <subcellularLocation>
        <location evidence="1">Cytoplasm</location>
    </subcellularLocation>
</comment>
<comment type="domain">
    <text evidence="1">IleRS has two distinct active sites: one for aminoacylation and one for editing. The misactivated valine is translocated from the active site to the editing site, which sterically excludes the correctly activated isoleucine. The single editing site contains two valyl binding pockets, one specific for each substrate (Val-AMP or Val-tRNA(Ile)).</text>
</comment>
<comment type="similarity">
    <text evidence="1">Belongs to the class-I aminoacyl-tRNA synthetase family. IleS type 1 subfamily.</text>
</comment>
<proteinExistence type="inferred from homology"/>